<reference key="1">
    <citation type="journal article" date="2001" name="Nature">
        <title>Complete genome sequence of Salmonella enterica serovar Typhimurium LT2.</title>
        <authorList>
            <person name="McClelland M."/>
            <person name="Sanderson K.E."/>
            <person name="Spieth J."/>
            <person name="Clifton S.W."/>
            <person name="Latreille P."/>
            <person name="Courtney L."/>
            <person name="Porwollik S."/>
            <person name="Ali J."/>
            <person name="Dante M."/>
            <person name="Du F."/>
            <person name="Hou S."/>
            <person name="Layman D."/>
            <person name="Leonard S."/>
            <person name="Nguyen C."/>
            <person name="Scott K."/>
            <person name="Holmes A."/>
            <person name="Grewal N."/>
            <person name="Mulvaney E."/>
            <person name="Ryan E."/>
            <person name="Sun H."/>
            <person name="Florea L."/>
            <person name="Miller W."/>
            <person name="Stoneking T."/>
            <person name="Nhan M."/>
            <person name="Waterston R."/>
            <person name="Wilson R.K."/>
        </authorList>
    </citation>
    <scope>NUCLEOTIDE SEQUENCE [LARGE SCALE GENOMIC DNA]</scope>
    <source>
        <strain>LT2 / SGSC1412 / ATCC 700720</strain>
    </source>
</reference>
<feature type="chain" id="PRO_0000214710" description="Citrate lyase acyl carrier protein 2">
    <location>
        <begin position="1"/>
        <end position="97"/>
    </location>
</feature>
<feature type="modified residue" description="O-(phosphoribosyl dephospho-coenzyme A)serine" evidence="1">
    <location>
        <position position="14"/>
    </location>
</feature>
<gene>
    <name evidence="1" type="primary">citD2</name>
    <name type="ordered locus">STM0059</name>
</gene>
<sequence>MKIIKDALAGTLESSDVMIRIGPSSEPGIRLELESLVKQQFGAAIEQVVRETLAKLGVERALVSVDDKGALECILRARVQAAALRAAEQTEIQWSAL</sequence>
<comment type="function">
    <text evidence="1">Covalent carrier of the coenzyme of citrate lyase.</text>
</comment>
<comment type="subunit">
    <text evidence="1">Oligomer with a subunit composition of (alpha,beta,gamma)6.</text>
</comment>
<comment type="subcellular location">
    <subcellularLocation>
        <location evidence="1">Cytoplasm</location>
    </subcellularLocation>
</comment>
<comment type="similarity">
    <text evidence="1">Belongs to the CitD family.</text>
</comment>
<organism>
    <name type="scientific">Salmonella typhimurium (strain LT2 / SGSC1412 / ATCC 700720)</name>
    <dbReference type="NCBI Taxonomy" id="99287"/>
    <lineage>
        <taxon>Bacteria</taxon>
        <taxon>Pseudomonadati</taxon>
        <taxon>Pseudomonadota</taxon>
        <taxon>Gammaproteobacteria</taxon>
        <taxon>Enterobacterales</taxon>
        <taxon>Enterobacteriaceae</taxon>
        <taxon>Salmonella</taxon>
    </lineage>
</organism>
<protein>
    <recommendedName>
        <fullName evidence="1">Citrate lyase acyl carrier protein 2</fullName>
    </recommendedName>
    <alternativeName>
        <fullName evidence="1">Citrate lyase gamma chain 2</fullName>
    </alternativeName>
</protein>
<proteinExistence type="inferred from homology"/>
<keyword id="KW-0963">Cytoplasm</keyword>
<keyword id="KW-0597">Phosphoprotein</keyword>
<keyword id="KW-1185">Reference proteome</keyword>
<evidence type="ECO:0000255" key="1">
    <source>
        <dbReference type="HAMAP-Rule" id="MF_00805"/>
    </source>
</evidence>
<name>CITD2_SALTY</name>
<dbReference type="EMBL" id="AE006468">
    <property type="protein sequence ID" value="AAL19023.1"/>
    <property type="molecule type" value="Genomic_DNA"/>
</dbReference>
<dbReference type="RefSeq" id="NP_459064.1">
    <property type="nucleotide sequence ID" value="NC_003197.2"/>
</dbReference>
<dbReference type="SMR" id="Q7CR91"/>
<dbReference type="STRING" id="99287.STM0059"/>
<dbReference type="PaxDb" id="99287-STM0059"/>
<dbReference type="GeneID" id="1251577"/>
<dbReference type="KEGG" id="stm:STM0059"/>
<dbReference type="PATRIC" id="fig|99287.12.peg.61"/>
<dbReference type="HOGENOM" id="CLU_158489_0_0_6"/>
<dbReference type="OMA" id="DENINWE"/>
<dbReference type="PhylomeDB" id="Q7CR91"/>
<dbReference type="BioCyc" id="SENT99287:STM0059-MONOMER"/>
<dbReference type="Proteomes" id="UP000001014">
    <property type="component" value="Chromosome"/>
</dbReference>
<dbReference type="GO" id="GO:0005737">
    <property type="term" value="C:cytoplasm"/>
    <property type="evidence" value="ECO:0007669"/>
    <property type="project" value="UniProtKB-SubCell"/>
</dbReference>
<dbReference type="HAMAP" id="MF_00805">
    <property type="entry name" value="CitD"/>
    <property type="match status" value="1"/>
</dbReference>
<dbReference type="InterPro" id="IPR006495">
    <property type="entry name" value="CitD"/>
</dbReference>
<dbReference type="InterPro" id="IPR023439">
    <property type="entry name" value="Mal_deCO2ase/Cit_lyase_ACP"/>
</dbReference>
<dbReference type="NCBIfam" id="TIGR01608">
    <property type="entry name" value="citD"/>
    <property type="match status" value="1"/>
</dbReference>
<dbReference type="NCBIfam" id="NF009726">
    <property type="entry name" value="PRK13253.1"/>
    <property type="match status" value="1"/>
</dbReference>
<dbReference type="Pfam" id="PF06857">
    <property type="entry name" value="ACP"/>
    <property type="match status" value="1"/>
</dbReference>
<dbReference type="PIRSF" id="PIRSF002736">
    <property type="entry name" value="Citrt_lyas_gamma"/>
    <property type="match status" value="1"/>
</dbReference>
<accession>Q7CR91</accession>